<keyword id="KW-0030">Aminoacyl-tRNA synthetase</keyword>
<keyword id="KW-0067">ATP-binding</keyword>
<keyword id="KW-0963">Cytoplasm</keyword>
<keyword id="KW-0436">Ligase</keyword>
<keyword id="KW-0547">Nucleotide-binding</keyword>
<keyword id="KW-0648">Protein biosynthesis</keyword>
<keyword id="KW-1185">Reference proteome</keyword>
<gene>
    <name evidence="1" type="primary">proS</name>
    <name type="ordered locus">HD_1919</name>
</gene>
<feature type="chain" id="PRO_0000248700" description="Proline--tRNA ligase">
    <location>
        <begin position="1"/>
        <end position="571"/>
    </location>
</feature>
<dbReference type="EC" id="6.1.1.15" evidence="1"/>
<dbReference type="EMBL" id="AE017143">
    <property type="protein sequence ID" value="AAP96642.1"/>
    <property type="molecule type" value="Genomic_DNA"/>
</dbReference>
<dbReference type="RefSeq" id="WP_010945670.1">
    <property type="nucleotide sequence ID" value="NC_002940.2"/>
</dbReference>
<dbReference type="SMR" id="Q7VKI5"/>
<dbReference type="STRING" id="233412.HD_1919"/>
<dbReference type="KEGG" id="hdu:HD_1919"/>
<dbReference type="eggNOG" id="COG0442">
    <property type="taxonomic scope" value="Bacteria"/>
</dbReference>
<dbReference type="HOGENOM" id="CLU_016739_0_0_6"/>
<dbReference type="OrthoDB" id="9809052at2"/>
<dbReference type="Proteomes" id="UP000001022">
    <property type="component" value="Chromosome"/>
</dbReference>
<dbReference type="GO" id="GO:0005829">
    <property type="term" value="C:cytosol"/>
    <property type="evidence" value="ECO:0007669"/>
    <property type="project" value="TreeGrafter"/>
</dbReference>
<dbReference type="GO" id="GO:0002161">
    <property type="term" value="F:aminoacyl-tRNA deacylase activity"/>
    <property type="evidence" value="ECO:0007669"/>
    <property type="project" value="InterPro"/>
</dbReference>
<dbReference type="GO" id="GO:0005524">
    <property type="term" value="F:ATP binding"/>
    <property type="evidence" value="ECO:0007669"/>
    <property type="project" value="UniProtKB-UniRule"/>
</dbReference>
<dbReference type="GO" id="GO:0004827">
    <property type="term" value="F:proline-tRNA ligase activity"/>
    <property type="evidence" value="ECO:0007669"/>
    <property type="project" value="UniProtKB-UniRule"/>
</dbReference>
<dbReference type="GO" id="GO:0006433">
    <property type="term" value="P:prolyl-tRNA aminoacylation"/>
    <property type="evidence" value="ECO:0007669"/>
    <property type="project" value="UniProtKB-UniRule"/>
</dbReference>
<dbReference type="CDD" id="cd04334">
    <property type="entry name" value="ProRS-INS"/>
    <property type="match status" value="1"/>
</dbReference>
<dbReference type="CDD" id="cd00861">
    <property type="entry name" value="ProRS_anticodon_short"/>
    <property type="match status" value="1"/>
</dbReference>
<dbReference type="CDD" id="cd00779">
    <property type="entry name" value="ProRS_core_prok"/>
    <property type="match status" value="1"/>
</dbReference>
<dbReference type="FunFam" id="3.30.930.10:FF:000043">
    <property type="entry name" value="Proline--tRNA ligase"/>
    <property type="match status" value="1"/>
</dbReference>
<dbReference type="FunFam" id="3.30.930.10:FF:000097">
    <property type="entry name" value="Proline--tRNA ligase"/>
    <property type="match status" value="1"/>
</dbReference>
<dbReference type="FunFam" id="3.40.50.800:FF:000006">
    <property type="entry name" value="Proline--tRNA ligase"/>
    <property type="match status" value="1"/>
</dbReference>
<dbReference type="FunFam" id="3.90.960.10:FF:000001">
    <property type="entry name" value="Proline--tRNA ligase"/>
    <property type="match status" value="1"/>
</dbReference>
<dbReference type="Gene3D" id="3.40.50.800">
    <property type="entry name" value="Anticodon-binding domain"/>
    <property type="match status" value="1"/>
</dbReference>
<dbReference type="Gene3D" id="3.30.930.10">
    <property type="entry name" value="Bira Bifunctional Protein, Domain 2"/>
    <property type="match status" value="2"/>
</dbReference>
<dbReference type="Gene3D" id="3.90.960.10">
    <property type="entry name" value="YbaK/aminoacyl-tRNA synthetase-associated domain"/>
    <property type="match status" value="1"/>
</dbReference>
<dbReference type="HAMAP" id="MF_01569">
    <property type="entry name" value="Pro_tRNA_synth_type1"/>
    <property type="match status" value="1"/>
</dbReference>
<dbReference type="InterPro" id="IPR002314">
    <property type="entry name" value="aa-tRNA-synt_IIb"/>
</dbReference>
<dbReference type="InterPro" id="IPR006195">
    <property type="entry name" value="aa-tRNA-synth_II"/>
</dbReference>
<dbReference type="InterPro" id="IPR045864">
    <property type="entry name" value="aa-tRNA-synth_II/BPL/LPL"/>
</dbReference>
<dbReference type="InterPro" id="IPR004154">
    <property type="entry name" value="Anticodon-bd"/>
</dbReference>
<dbReference type="InterPro" id="IPR036621">
    <property type="entry name" value="Anticodon-bd_dom_sf"/>
</dbReference>
<dbReference type="InterPro" id="IPR002316">
    <property type="entry name" value="Pro-tRNA-ligase_IIa"/>
</dbReference>
<dbReference type="InterPro" id="IPR004500">
    <property type="entry name" value="Pro-tRNA-synth_IIa_bac-type"/>
</dbReference>
<dbReference type="InterPro" id="IPR023717">
    <property type="entry name" value="Pro-tRNA-Synthase_IIa_type1"/>
</dbReference>
<dbReference type="InterPro" id="IPR050062">
    <property type="entry name" value="Pro-tRNA_synthetase"/>
</dbReference>
<dbReference type="InterPro" id="IPR044140">
    <property type="entry name" value="ProRS_anticodon_short"/>
</dbReference>
<dbReference type="InterPro" id="IPR033730">
    <property type="entry name" value="ProRS_core_prok"/>
</dbReference>
<dbReference type="InterPro" id="IPR036754">
    <property type="entry name" value="YbaK/aa-tRNA-synt-asso_dom_sf"/>
</dbReference>
<dbReference type="InterPro" id="IPR007214">
    <property type="entry name" value="YbaK/aa-tRNA-synth-assoc-dom"/>
</dbReference>
<dbReference type="NCBIfam" id="NF006625">
    <property type="entry name" value="PRK09194.1"/>
    <property type="match status" value="1"/>
</dbReference>
<dbReference type="NCBIfam" id="TIGR00409">
    <property type="entry name" value="proS_fam_II"/>
    <property type="match status" value="1"/>
</dbReference>
<dbReference type="PANTHER" id="PTHR42753">
    <property type="entry name" value="MITOCHONDRIAL RIBOSOME PROTEIN L39/PROLYL-TRNA LIGASE FAMILY MEMBER"/>
    <property type="match status" value="1"/>
</dbReference>
<dbReference type="PANTHER" id="PTHR42753:SF2">
    <property type="entry name" value="PROLINE--TRNA LIGASE"/>
    <property type="match status" value="1"/>
</dbReference>
<dbReference type="Pfam" id="PF03129">
    <property type="entry name" value="HGTP_anticodon"/>
    <property type="match status" value="1"/>
</dbReference>
<dbReference type="Pfam" id="PF00587">
    <property type="entry name" value="tRNA-synt_2b"/>
    <property type="match status" value="1"/>
</dbReference>
<dbReference type="Pfam" id="PF04073">
    <property type="entry name" value="tRNA_edit"/>
    <property type="match status" value="1"/>
</dbReference>
<dbReference type="PIRSF" id="PIRSF001535">
    <property type="entry name" value="ProRS_1"/>
    <property type="match status" value="1"/>
</dbReference>
<dbReference type="PRINTS" id="PR01046">
    <property type="entry name" value="TRNASYNTHPRO"/>
</dbReference>
<dbReference type="SUPFAM" id="SSF52954">
    <property type="entry name" value="Class II aaRS ABD-related"/>
    <property type="match status" value="1"/>
</dbReference>
<dbReference type="SUPFAM" id="SSF55681">
    <property type="entry name" value="Class II aaRS and biotin synthetases"/>
    <property type="match status" value="1"/>
</dbReference>
<dbReference type="SUPFAM" id="SSF55826">
    <property type="entry name" value="YbaK/ProRS associated domain"/>
    <property type="match status" value="1"/>
</dbReference>
<dbReference type="PROSITE" id="PS50862">
    <property type="entry name" value="AA_TRNA_LIGASE_II"/>
    <property type="match status" value="1"/>
</dbReference>
<proteinExistence type="inferred from homology"/>
<evidence type="ECO:0000255" key="1">
    <source>
        <dbReference type="HAMAP-Rule" id="MF_01569"/>
    </source>
</evidence>
<organism>
    <name type="scientific">Haemophilus ducreyi (strain 35000HP / ATCC 700724)</name>
    <dbReference type="NCBI Taxonomy" id="233412"/>
    <lineage>
        <taxon>Bacteria</taxon>
        <taxon>Pseudomonadati</taxon>
        <taxon>Pseudomonadota</taxon>
        <taxon>Gammaproteobacteria</taxon>
        <taxon>Pasteurellales</taxon>
        <taxon>Pasteurellaceae</taxon>
        <taxon>Haemophilus</taxon>
    </lineage>
</organism>
<protein>
    <recommendedName>
        <fullName evidence="1">Proline--tRNA ligase</fullName>
        <ecNumber evidence="1">6.1.1.15</ecNumber>
    </recommendedName>
    <alternativeName>
        <fullName evidence="1">Prolyl-tRNA synthetase</fullName>
        <shortName evidence="1">ProRS</shortName>
    </alternativeName>
</protein>
<accession>Q7VKI5</accession>
<name>SYP_HAEDU</name>
<reference key="1">
    <citation type="submission" date="2003-06" db="EMBL/GenBank/DDBJ databases">
        <title>The complete genome sequence of Haemophilus ducreyi.</title>
        <authorList>
            <person name="Munson R.S. Jr."/>
            <person name="Ray W.C."/>
            <person name="Mahairas G."/>
            <person name="Sabo P."/>
            <person name="Mungur R."/>
            <person name="Johnson L."/>
            <person name="Nguyen D."/>
            <person name="Wang J."/>
            <person name="Forst C."/>
            <person name="Hood L."/>
        </authorList>
    </citation>
    <scope>NUCLEOTIDE SEQUENCE [LARGE SCALE GENOMIC DNA]</scope>
    <source>
        <strain>35000HP / ATCC 700724</strain>
    </source>
</reference>
<comment type="function">
    <text evidence="1">Catalyzes the attachment of proline to tRNA(Pro) in a two-step reaction: proline is first activated by ATP to form Pro-AMP and then transferred to the acceptor end of tRNA(Pro). As ProRS can inadvertently accommodate and process non-cognate amino acids such as alanine and cysteine, to avoid such errors it has two additional distinct editing activities against alanine. One activity is designated as 'pretransfer' editing and involves the tRNA(Pro)-independent hydrolysis of activated Ala-AMP. The other activity is designated 'posttransfer' editing and involves deacylation of mischarged Ala-tRNA(Pro). The misacylated Cys-tRNA(Pro) is not edited by ProRS.</text>
</comment>
<comment type="catalytic activity">
    <reaction evidence="1">
        <text>tRNA(Pro) + L-proline + ATP = L-prolyl-tRNA(Pro) + AMP + diphosphate</text>
        <dbReference type="Rhea" id="RHEA:14305"/>
        <dbReference type="Rhea" id="RHEA-COMP:9700"/>
        <dbReference type="Rhea" id="RHEA-COMP:9702"/>
        <dbReference type="ChEBI" id="CHEBI:30616"/>
        <dbReference type="ChEBI" id="CHEBI:33019"/>
        <dbReference type="ChEBI" id="CHEBI:60039"/>
        <dbReference type="ChEBI" id="CHEBI:78442"/>
        <dbReference type="ChEBI" id="CHEBI:78532"/>
        <dbReference type="ChEBI" id="CHEBI:456215"/>
        <dbReference type="EC" id="6.1.1.15"/>
    </reaction>
</comment>
<comment type="subunit">
    <text evidence="1">Homodimer.</text>
</comment>
<comment type="subcellular location">
    <subcellularLocation>
        <location evidence="1">Cytoplasm</location>
    </subcellularLocation>
</comment>
<comment type="domain">
    <text evidence="1">Consists of three domains: the N-terminal catalytic domain, the editing domain and the C-terminal anticodon-binding domain.</text>
</comment>
<comment type="similarity">
    <text evidence="1">Belongs to the class-II aminoacyl-tRNA synthetase family. ProS type 1 subfamily.</text>
</comment>
<sequence length="571" mass="63544">MRTSQYLFSTLKETPNDAQVISHQLMLRAGMIRPTAAGLYNWLPTGVKILKKVENIIREEMNKGGAIEILMPVVQPAELWQESSRWEQYGPELLRFADRGKRDFVLGPTHEEVITDLVRRELSSYKQLPLNLYQIQTKFRDEVRPRFGVMRSREFVMKDAYSFHTTPESLQQTYEVMYQVYHRIFTRLGLDFRTVQADTGSIGGSASHEFQVLASSGEDDIVFSTESDFAANIELAEAVAMGESKPATEAMVLIDTPNAKTIAELVAQFDLAIEKTVKTLIVKGANETAPLVALILRGDHELNEIKAQKHPLVAEPLAFADEDEIKAKIGVSVGYLGPVNLAIPAIVDRSVALMSDFVAGANIDGKHYLNINWQRDVVLPEVFDLRNVVVGDPSPDGRGILLIKRGIEVGHIFQLGQKYSAAMNATVQGEDGKPLVMTMGCYGIGVTRVVAAAIEQHHDERGIIWPTDEIAPFTVAIVPMNMFKSASVQAFAEQLYTDLMAQGVDVILDDRKERPGVMFADMELIGVPHMIVIGEKNLENGEVEYKNRRTGEKTMIAKDQLLAYLAQNVRA</sequence>